<keyword id="KW-0030">Aminoacyl-tRNA synthetase</keyword>
<keyword id="KW-0067">ATP-binding</keyword>
<keyword id="KW-0963">Cytoplasm</keyword>
<keyword id="KW-0436">Ligase</keyword>
<keyword id="KW-0547">Nucleotide-binding</keyword>
<keyword id="KW-0648">Protein biosynthesis</keyword>
<accession>Q6E6B4</accession>
<reference key="1">
    <citation type="journal article" date="2004" name="Curr. Biol.">
        <title>Genome compaction and stability in microsporidian intracellular parasites.</title>
        <authorList>
            <person name="Slamovits C.H."/>
            <person name="Fast N.M."/>
            <person name="Law J.S."/>
            <person name="Keeling P.J."/>
        </authorList>
    </citation>
    <scope>NUCLEOTIDE SEQUENCE [GENOMIC DNA]</scope>
</reference>
<proteinExistence type="inferred from homology"/>
<protein>
    <recommendedName>
        <fullName>Probable histidine--tRNA ligase, cytoplasmic</fullName>
        <ecNumber>6.1.1.21</ecNumber>
    </recommendedName>
    <alternativeName>
        <fullName>Histidyl-tRNA synthetase</fullName>
        <shortName>HisRS</shortName>
    </alternativeName>
</protein>
<sequence>MDLRTPKGTHDYGPRECYLLNRFLRAVTEVFETHGAACIDTPTFELRELLCNKYGDESRLIFDLADQGGDICSLRYDLTVSFARFLAKHRVQRLKRFQIGKVFRRDQPSVSKGRLREFVQCDLDIAGAYMEMVADAEAICIMSECLDRVGHRYQIRISSRKILNALMEHSGIGRNNFATVCSTIDKMDRLPWADIAAELRTKGLVDGQVAVLKRYVCVSGGIEVIDTLRSGELYLYSDGKKGIDDLALLFKYLGIYGVGDRAVVDLSLARGLDYYTGVIFEAALVDFKDVGSVAGGGRYDNLVSSVLGKKSEWSVPCVGFSLGVTRILSVMLKVDRRRTTETEVFVGSSGGLLLEERMGVLSRLWRAGVAAETFYTRKYGYASLMEHVRKTDIPFFLLVGEKEIAENRFRLMYGEDRALQMYGDIDTIVNFIKSHRAGQRPPAGL</sequence>
<organism>
    <name type="scientific">Antonospora locustae</name>
    <name type="common">Microsporidian parasite</name>
    <name type="synonym">Nosema locustae</name>
    <dbReference type="NCBI Taxonomy" id="278021"/>
    <lineage>
        <taxon>Eukaryota</taxon>
        <taxon>Fungi</taxon>
        <taxon>Fungi incertae sedis</taxon>
        <taxon>Microsporidia</taxon>
        <taxon>Antonospora</taxon>
    </lineage>
</organism>
<name>SYHC_ANTLO</name>
<evidence type="ECO:0000250" key="1"/>
<evidence type="ECO:0000305" key="2"/>
<dbReference type="EC" id="6.1.1.21"/>
<dbReference type="EMBL" id="AY548908">
    <property type="protein sequence ID" value="AAT12372.1"/>
    <property type="molecule type" value="Genomic_DNA"/>
</dbReference>
<dbReference type="SMR" id="Q6E6B4"/>
<dbReference type="GO" id="GO:0005829">
    <property type="term" value="C:cytosol"/>
    <property type="evidence" value="ECO:0007669"/>
    <property type="project" value="TreeGrafter"/>
</dbReference>
<dbReference type="GO" id="GO:0005739">
    <property type="term" value="C:mitochondrion"/>
    <property type="evidence" value="ECO:0007669"/>
    <property type="project" value="TreeGrafter"/>
</dbReference>
<dbReference type="GO" id="GO:0005524">
    <property type="term" value="F:ATP binding"/>
    <property type="evidence" value="ECO:0007669"/>
    <property type="project" value="UniProtKB-KW"/>
</dbReference>
<dbReference type="GO" id="GO:0004821">
    <property type="term" value="F:histidine-tRNA ligase activity"/>
    <property type="evidence" value="ECO:0007669"/>
    <property type="project" value="UniProtKB-EC"/>
</dbReference>
<dbReference type="GO" id="GO:0003723">
    <property type="term" value="F:RNA binding"/>
    <property type="evidence" value="ECO:0007669"/>
    <property type="project" value="TreeGrafter"/>
</dbReference>
<dbReference type="GO" id="GO:0006427">
    <property type="term" value="P:histidyl-tRNA aminoacylation"/>
    <property type="evidence" value="ECO:0007669"/>
    <property type="project" value="TreeGrafter"/>
</dbReference>
<dbReference type="GO" id="GO:0032543">
    <property type="term" value="P:mitochondrial translation"/>
    <property type="evidence" value="ECO:0007669"/>
    <property type="project" value="TreeGrafter"/>
</dbReference>
<dbReference type="CDD" id="cd00773">
    <property type="entry name" value="HisRS-like_core"/>
    <property type="match status" value="1"/>
</dbReference>
<dbReference type="Gene3D" id="3.40.50.800">
    <property type="entry name" value="Anticodon-binding domain"/>
    <property type="match status" value="1"/>
</dbReference>
<dbReference type="Gene3D" id="3.30.930.10">
    <property type="entry name" value="Bira Bifunctional Protein, Domain 2"/>
    <property type="match status" value="1"/>
</dbReference>
<dbReference type="InterPro" id="IPR006195">
    <property type="entry name" value="aa-tRNA-synth_II"/>
</dbReference>
<dbReference type="InterPro" id="IPR045864">
    <property type="entry name" value="aa-tRNA-synth_II/BPL/LPL"/>
</dbReference>
<dbReference type="InterPro" id="IPR036621">
    <property type="entry name" value="Anticodon-bd_dom_sf"/>
</dbReference>
<dbReference type="InterPro" id="IPR041715">
    <property type="entry name" value="HisRS-like_core"/>
</dbReference>
<dbReference type="InterPro" id="IPR004516">
    <property type="entry name" value="HisRS/HisZ"/>
</dbReference>
<dbReference type="PANTHER" id="PTHR11476:SF7">
    <property type="entry name" value="HISTIDINE--TRNA LIGASE"/>
    <property type="match status" value="1"/>
</dbReference>
<dbReference type="PANTHER" id="PTHR11476">
    <property type="entry name" value="HISTIDYL-TRNA SYNTHETASE"/>
    <property type="match status" value="1"/>
</dbReference>
<dbReference type="Pfam" id="PF13393">
    <property type="entry name" value="tRNA-synt_His"/>
    <property type="match status" value="1"/>
</dbReference>
<dbReference type="PIRSF" id="PIRSF001549">
    <property type="entry name" value="His-tRNA_synth"/>
    <property type="match status" value="1"/>
</dbReference>
<dbReference type="SUPFAM" id="SSF52954">
    <property type="entry name" value="Class II aaRS ABD-related"/>
    <property type="match status" value="1"/>
</dbReference>
<dbReference type="SUPFAM" id="SSF55681">
    <property type="entry name" value="Class II aaRS and biotin synthetases"/>
    <property type="match status" value="1"/>
</dbReference>
<dbReference type="PROSITE" id="PS50862">
    <property type="entry name" value="AA_TRNA_LIGASE_II"/>
    <property type="match status" value="1"/>
</dbReference>
<comment type="catalytic activity">
    <reaction>
        <text>tRNA(His) + L-histidine + ATP = L-histidyl-tRNA(His) + AMP + diphosphate + H(+)</text>
        <dbReference type="Rhea" id="RHEA:17313"/>
        <dbReference type="Rhea" id="RHEA-COMP:9665"/>
        <dbReference type="Rhea" id="RHEA-COMP:9689"/>
        <dbReference type="ChEBI" id="CHEBI:15378"/>
        <dbReference type="ChEBI" id="CHEBI:30616"/>
        <dbReference type="ChEBI" id="CHEBI:33019"/>
        <dbReference type="ChEBI" id="CHEBI:57595"/>
        <dbReference type="ChEBI" id="CHEBI:78442"/>
        <dbReference type="ChEBI" id="CHEBI:78527"/>
        <dbReference type="ChEBI" id="CHEBI:456215"/>
        <dbReference type="EC" id="6.1.1.21"/>
    </reaction>
</comment>
<comment type="subcellular location">
    <subcellularLocation>
        <location evidence="1">Cytoplasm</location>
    </subcellularLocation>
</comment>
<comment type="similarity">
    <text evidence="2">Belongs to the class-II aminoacyl-tRNA synthetase family.</text>
</comment>
<feature type="chain" id="PRO_0000388402" description="Probable histidine--tRNA ligase, cytoplasmic">
    <location>
        <begin position="1"/>
        <end position="445"/>
    </location>
</feature>